<gene>
    <name type="primary">Gjd2</name>
    <name type="synonym">Gja9</name>
</gene>
<keyword id="KW-0965">Cell junction</keyword>
<keyword id="KW-1003">Cell membrane</keyword>
<keyword id="KW-0303">Gap junction</keyword>
<keyword id="KW-0472">Membrane</keyword>
<keyword id="KW-1185">Reference proteome</keyword>
<keyword id="KW-0812">Transmembrane</keyword>
<keyword id="KW-1133">Transmembrane helix</keyword>
<reference key="1">
    <citation type="journal article" date="1998" name="FEBS Lett.">
        <title>The murine gap junction gene connexin36 is highly expressed in mouse retina and regulated during brain development.</title>
        <authorList>
            <person name="Soehl G."/>
            <person name="Degen J."/>
            <person name="Teubner B."/>
            <person name="Willecke K."/>
        </authorList>
    </citation>
    <scope>NUCLEOTIDE SEQUENCE [MRNA]</scope>
    <source>
        <strain>Sprague-Dawley</strain>
        <tissue>Brain</tissue>
    </source>
</reference>
<reference key="2">
    <citation type="submission" date="2000-11" db="EMBL/GenBank/DDBJ databases">
        <title>Expression and localization of neuronal gap junction channel proteins in rat retina and brain, revealed with antisera raised to connexin36.</title>
        <authorList>
            <person name="Hidaka S."/>
        </authorList>
    </citation>
    <scope>NUCLEOTIDE SEQUENCE [MRNA]</scope>
    <source>
        <strain>Wistar</strain>
        <tissue>Retina</tissue>
    </source>
</reference>
<accession>O70610</accession>
<accession>Q9ER25</accession>
<comment type="function">
    <text>One gap junction consists of a cluster of closely packed pairs of transmembrane channels, the connexons, through which materials of low MW diffuse from one cell to a neighboring cell.</text>
</comment>
<comment type="subunit">
    <text>A connexon is composed of a hexamer of connexins.</text>
</comment>
<comment type="subcellular location">
    <subcellularLocation>
        <location>Cell membrane</location>
        <topology>Multi-pass membrane protein</topology>
    </subcellularLocation>
    <subcellularLocation>
        <location>Cell junction</location>
        <location>Gap junction</location>
    </subcellularLocation>
</comment>
<comment type="tissue specificity">
    <text>Highly expressed in neurons.</text>
</comment>
<comment type="similarity">
    <text evidence="3">Belongs to the connexin family. Delta-type subfamily.</text>
</comment>
<evidence type="ECO:0000255" key="1"/>
<evidence type="ECO:0000256" key="2">
    <source>
        <dbReference type="SAM" id="MobiDB-lite"/>
    </source>
</evidence>
<evidence type="ECO:0000305" key="3"/>
<dbReference type="EMBL" id="Y16898">
    <property type="protein sequence ID" value="CAA76528.1"/>
    <property type="molecule type" value="mRNA"/>
</dbReference>
<dbReference type="EMBL" id="AJ296282">
    <property type="protein sequence ID" value="CAC14913.1"/>
    <property type="molecule type" value="mRNA"/>
</dbReference>
<dbReference type="RefSeq" id="NP_062154.1">
    <property type="nucleotide sequence ID" value="NM_019281.2"/>
</dbReference>
<dbReference type="SMR" id="O70610"/>
<dbReference type="DIP" id="DIP-60789N"/>
<dbReference type="FunCoup" id="O70610">
    <property type="interactions" value="123"/>
</dbReference>
<dbReference type="IntAct" id="O70610">
    <property type="interactions" value="1"/>
</dbReference>
<dbReference type="STRING" id="10116.ENSRNOP00000011078"/>
<dbReference type="PhosphoSitePlus" id="O70610"/>
<dbReference type="PaxDb" id="10116-ENSRNOP00000011078"/>
<dbReference type="Ensembl" id="ENSRNOT00000011078.4">
    <property type="protein sequence ID" value="ENSRNOP00000011078.1"/>
    <property type="gene ID" value="ENSRNOG00000008337.4"/>
</dbReference>
<dbReference type="GeneID" id="50564"/>
<dbReference type="KEGG" id="rno:50564"/>
<dbReference type="UCSC" id="RGD:2694">
    <property type="organism name" value="rat"/>
</dbReference>
<dbReference type="AGR" id="RGD:2694"/>
<dbReference type="CTD" id="57369"/>
<dbReference type="RGD" id="2694">
    <property type="gene designation" value="Gjd2"/>
</dbReference>
<dbReference type="eggNOG" id="ENOG502QV4X">
    <property type="taxonomic scope" value="Eukaryota"/>
</dbReference>
<dbReference type="GeneTree" id="ENSGT01130000278276"/>
<dbReference type="HOGENOM" id="CLU_037388_4_0_1"/>
<dbReference type="InParanoid" id="O70610"/>
<dbReference type="OMA" id="KEMEPDC"/>
<dbReference type="OrthoDB" id="10012477at2759"/>
<dbReference type="PhylomeDB" id="O70610"/>
<dbReference type="TreeFam" id="TF329606"/>
<dbReference type="Reactome" id="R-RNO-112303">
    <property type="pathway name" value="Electric Transmission Across Gap Junctions"/>
</dbReference>
<dbReference type="Reactome" id="R-RNO-190861">
    <property type="pathway name" value="Gap junction assembly"/>
</dbReference>
<dbReference type="PRO" id="PR:O70610"/>
<dbReference type="Proteomes" id="UP000002494">
    <property type="component" value="Chromosome 3"/>
</dbReference>
<dbReference type="Bgee" id="ENSRNOG00000008337">
    <property type="expression patterns" value="Expressed in cerebellum and 7 other cell types or tissues"/>
</dbReference>
<dbReference type="GO" id="GO:0005922">
    <property type="term" value="C:connexin complex"/>
    <property type="evidence" value="ECO:0000318"/>
    <property type="project" value="GO_Central"/>
</dbReference>
<dbReference type="GO" id="GO:0005921">
    <property type="term" value="C:gap junction"/>
    <property type="evidence" value="ECO:0000314"/>
    <property type="project" value="MGI"/>
</dbReference>
<dbReference type="GO" id="GO:0045202">
    <property type="term" value="C:synapse"/>
    <property type="evidence" value="ECO:0007669"/>
    <property type="project" value="GOC"/>
</dbReference>
<dbReference type="GO" id="GO:0005243">
    <property type="term" value="F:gap junction channel activity"/>
    <property type="evidence" value="ECO:0000318"/>
    <property type="project" value="GO_Central"/>
</dbReference>
<dbReference type="GO" id="GO:0007267">
    <property type="term" value="P:cell-cell signaling"/>
    <property type="evidence" value="ECO:0000270"/>
    <property type="project" value="RGD"/>
</dbReference>
<dbReference type="GO" id="GO:0007268">
    <property type="term" value="P:chemical synaptic transmission"/>
    <property type="evidence" value="ECO:0000266"/>
    <property type="project" value="RGD"/>
</dbReference>
<dbReference type="GO" id="GO:0019228">
    <property type="term" value="P:neuronal action potential"/>
    <property type="evidence" value="ECO:0000266"/>
    <property type="project" value="RGD"/>
</dbReference>
<dbReference type="GO" id="GO:0007601">
    <property type="term" value="P:visual perception"/>
    <property type="evidence" value="ECO:0000266"/>
    <property type="project" value="RGD"/>
</dbReference>
<dbReference type="Gene3D" id="1.20.1440.80">
    <property type="entry name" value="Gap junction channel protein cysteine-rich domain"/>
    <property type="match status" value="1"/>
</dbReference>
<dbReference type="InterPro" id="IPR000500">
    <property type="entry name" value="Connexin"/>
</dbReference>
<dbReference type="InterPro" id="IPR002260">
    <property type="entry name" value="Connexin36"/>
</dbReference>
<dbReference type="InterPro" id="IPR019570">
    <property type="entry name" value="Connexin_CCC"/>
</dbReference>
<dbReference type="InterPro" id="IPR017990">
    <property type="entry name" value="Connexin_CS"/>
</dbReference>
<dbReference type="InterPro" id="IPR013092">
    <property type="entry name" value="Connexin_N"/>
</dbReference>
<dbReference type="InterPro" id="IPR038359">
    <property type="entry name" value="Connexin_N_sf"/>
</dbReference>
<dbReference type="PANTHER" id="PTHR11984">
    <property type="entry name" value="CONNEXIN"/>
    <property type="match status" value="1"/>
</dbReference>
<dbReference type="PANTHER" id="PTHR11984:SF32">
    <property type="entry name" value="GAP JUNCTION DELTA-2 PROTEIN"/>
    <property type="match status" value="1"/>
</dbReference>
<dbReference type="Pfam" id="PF00029">
    <property type="entry name" value="Connexin"/>
    <property type="match status" value="1"/>
</dbReference>
<dbReference type="PRINTS" id="PR00206">
    <property type="entry name" value="CONNEXIN"/>
</dbReference>
<dbReference type="PRINTS" id="PR01131">
    <property type="entry name" value="CONNEXIN36"/>
</dbReference>
<dbReference type="SMART" id="SM00037">
    <property type="entry name" value="CNX"/>
    <property type="match status" value="1"/>
</dbReference>
<dbReference type="SMART" id="SM01089">
    <property type="entry name" value="Connexin_CCC"/>
    <property type="match status" value="1"/>
</dbReference>
<dbReference type="PROSITE" id="PS00407">
    <property type="entry name" value="CONNEXINS_1"/>
    <property type="match status" value="1"/>
</dbReference>
<dbReference type="PROSITE" id="PS00408">
    <property type="entry name" value="CONNEXINS_2"/>
    <property type="match status" value="1"/>
</dbReference>
<proteinExistence type="evidence at transcript level"/>
<sequence>MGEWTILERLLEAAVQQHSTMIGRILLTVVVIFRILIVAIVGETVYDDEQTMFVCNTLQPGCNQACYDRAFPISHIRYWVFQIIMVCTPSLCFITYSVHQSAKQRERRYSTVFLALDRDPAESIGGPGGTGGGGSGGSKREDKKLQNAIVNGVLQNTETTSKETEPDCLEVKELAPHPSGLRTAARSKLRRQEGISRFYIIQVVFRNALEIGFLVGQYFLYGFSVPGLYECNRYPCIKEVECYVSRPTEKTVFLVFMFAVSGICVVLNLAELNHLGWRKIKLAVRGAQAKRKSVYEIRNKDLPRVSVPNFGRTQSSDSAYV</sequence>
<protein>
    <recommendedName>
        <fullName>Gap junction delta-2 protein</fullName>
    </recommendedName>
    <alternativeName>
        <fullName>Connexin-36</fullName>
        <shortName>Cx36</shortName>
    </alternativeName>
    <alternativeName>
        <fullName>Gap junction alpha-9 protein</fullName>
    </alternativeName>
</protein>
<feature type="chain" id="PRO_0000057837" description="Gap junction delta-2 protein">
    <location>
        <begin position="1"/>
        <end position="321"/>
    </location>
</feature>
<feature type="topological domain" description="Cytoplasmic" evidence="1">
    <location>
        <begin position="1"/>
        <end position="19"/>
    </location>
</feature>
<feature type="transmembrane region" description="Helical" evidence="1">
    <location>
        <begin position="20"/>
        <end position="42"/>
    </location>
</feature>
<feature type="topological domain" description="Extracellular" evidence="1">
    <location>
        <begin position="43"/>
        <end position="75"/>
    </location>
</feature>
<feature type="transmembrane region" description="Helical" evidence="1">
    <location>
        <begin position="76"/>
        <end position="98"/>
    </location>
</feature>
<feature type="topological domain" description="Cytoplasmic" evidence="1">
    <location>
        <begin position="99"/>
        <end position="197"/>
    </location>
</feature>
<feature type="transmembrane region" description="Helical" evidence="1">
    <location>
        <begin position="198"/>
        <end position="220"/>
    </location>
</feature>
<feature type="topological domain" description="Extracellular" evidence="1">
    <location>
        <begin position="221"/>
        <end position="252"/>
    </location>
</feature>
<feature type="transmembrane region" description="Helical" evidence="1">
    <location>
        <begin position="253"/>
        <end position="275"/>
    </location>
</feature>
<feature type="topological domain" description="Cytoplasmic" evidence="1">
    <location>
        <begin position="276"/>
        <end position="321"/>
    </location>
</feature>
<feature type="region of interest" description="Disordered" evidence="2">
    <location>
        <begin position="120"/>
        <end position="141"/>
    </location>
</feature>
<feature type="compositionally biased region" description="Gly residues" evidence="2">
    <location>
        <begin position="125"/>
        <end position="137"/>
    </location>
</feature>
<feature type="sequence conflict" description="In Ref. 2; CAC14913." evidence="3" ref="2">
    <original>T</original>
    <variation>A</variation>
    <location>
        <position position="57"/>
    </location>
</feature>
<organism>
    <name type="scientific">Rattus norvegicus</name>
    <name type="common">Rat</name>
    <dbReference type="NCBI Taxonomy" id="10116"/>
    <lineage>
        <taxon>Eukaryota</taxon>
        <taxon>Metazoa</taxon>
        <taxon>Chordata</taxon>
        <taxon>Craniata</taxon>
        <taxon>Vertebrata</taxon>
        <taxon>Euteleostomi</taxon>
        <taxon>Mammalia</taxon>
        <taxon>Eutheria</taxon>
        <taxon>Euarchontoglires</taxon>
        <taxon>Glires</taxon>
        <taxon>Rodentia</taxon>
        <taxon>Myomorpha</taxon>
        <taxon>Muroidea</taxon>
        <taxon>Muridae</taxon>
        <taxon>Murinae</taxon>
        <taxon>Rattus</taxon>
    </lineage>
</organism>
<name>CXD2_RAT</name>